<sequence>MFKEFKEFALKGNLVDLAVGFILGGAFGTIVTSLVNDIMMPPLGMLMGGVDFADLFISLNGTEYVSLVAATEAGAPVIAYGKFINAVISFVIMALALFFVIKGMNTLKKKEEAAPPPAPPRQEVLLEEIRNLLAKNQ</sequence>
<dbReference type="EMBL" id="CP000158">
    <property type="protein sequence ID" value="ABI76445.1"/>
    <property type="molecule type" value="Genomic_DNA"/>
</dbReference>
<dbReference type="RefSeq" id="WP_011645224.1">
    <property type="nucleotide sequence ID" value="NC_008358.1"/>
</dbReference>
<dbReference type="SMR" id="Q0C5R9"/>
<dbReference type="STRING" id="228405.HNE_0190"/>
<dbReference type="KEGG" id="hne:HNE_0190"/>
<dbReference type="eggNOG" id="COG1970">
    <property type="taxonomic scope" value="Bacteria"/>
</dbReference>
<dbReference type="HOGENOM" id="CLU_095787_2_3_5"/>
<dbReference type="Proteomes" id="UP000001959">
    <property type="component" value="Chromosome"/>
</dbReference>
<dbReference type="GO" id="GO:0005886">
    <property type="term" value="C:plasma membrane"/>
    <property type="evidence" value="ECO:0007669"/>
    <property type="project" value="UniProtKB-SubCell"/>
</dbReference>
<dbReference type="GO" id="GO:0008381">
    <property type="term" value="F:mechanosensitive monoatomic ion channel activity"/>
    <property type="evidence" value="ECO:0007669"/>
    <property type="project" value="UniProtKB-UniRule"/>
</dbReference>
<dbReference type="Gene3D" id="1.10.1200.120">
    <property type="entry name" value="Large-conductance mechanosensitive channel, MscL, domain 1"/>
    <property type="match status" value="1"/>
</dbReference>
<dbReference type="HAMAP" id="MF_00115">
    <property type="entry name" value="MscL"/>
    <property type="match status" value="1"/>
</dbReference>
<dbReference type="InterPro" id="IPR001185">
    <property type="entry name" value="MS_channel"/>
</dbReference>
<dbReference type="InterPro" id="IPR037673">
    <property type="entry name" value="MSC/AndL"/>
</dbReference>
<dbReference type="InterPro" id="IPR036019">
    <property type="entry name" value="MscL_channel"/>
</dbReference>
<dbReference type="NCBIfam" id="TIGR00220">
    <property type="entry name" value="mscL"/>
    <property type="match status" value="1"/>
</dbReference>
<dbReference type="NCBIfam" id="NF001843">
    <property type="entry name" value="PRK00567.1-4"/>
    <property type="match status" value="1"/>
</dbReference>
<dbReference type="NCBIfam" id="NF010557">
    <property type="entry name" value="PRK13952.1"/>
    <property type="match status" value="1"/>
</dbReference>
<dbReference type="PANTHER" id="PTHR30266:SF2">
    <property type="entry name" value="LARGE-CONDUCTANCE MECHANOSENSITIVE CHANNEL"/>
    <property type="match status" value="1"/>
</dbReference>
<dbReference type="PANTHER" id="PTHR30266">
    <property type="entry name" value="MECHANOSENSITIVE CHANNEL MSCL"/>
    <property type="match status" value="1"/>
</dbReference>
<dbReference type="Pfam" id="PF01741">
    <property type="entry name" value="MscL"/>
    <property type="match status" value="1"/>
</dbReference>
<dbReference type="PRINTS" id="PR01264">
    <property type="entry name" value="MECHCHANNEL"/>
</dbReference>
<dbReference type="SUPFAM" id="SSF81330">
    <property type="entry name" value="Gated mechanosensitive channel"/>
    <property type="match status" value="1"/>
</dbReference>
<name>MSCL_HYPNA</name>
<proteinExistence type="inferred from homology"/>
<feature type="chain" id="PRO_1000015385" description="Large-conductance mechanosensitive channel">
    <location>
        <begin position="1"/>
        <end position="137"/>
    </location>
</feature>
<feature type="transmembrane region" description="Helical" evidence="1">
    <location>
        <begin position="15"/>
        <end position="35"/>
    </location>
</feature>
<feature type="transmembrane region" description="Helical" evidence="1">
    <location>
        <begin position="81"/>
        <end position="101"/>
    </location>
</feature>
<keyword id="KW-0997">Cell inner membrane</keyword>
<keyword id="KW-1003">Cell membrane</keyword>
<keyword id="KW-0407">Ion channel</keyword>
<keyword id="KW-0406">Ion transport</keyword>
<keyword id="KW-0472">Membrane</keyword>
<keyword id="KW-1185">Reference proteome</keyword>
<keyword id="KW-0812">Transmembrane</keyword>
<keyword id="KW-1133">Transmembrane helix</keyword>
<keyword id="KW-0813">Transport</keyword>
<organism>
    <name type="scientific">Hyphomonas neptunium (strain ATCC 15444)</name>
    <dbReference type="NCBI Taxonomy" id="228405"/>
    <lineage>
        <taxon>Bacteria</taxon>
        <taxon>Pseudomonadati</taxon>
        <taxon>Pseudomonadota</taxon>
        <taxon>Alphaproteobacteria</taxon>
        <taxon>Hyphomonadales</taxon>
        <taxon>Hyphomonadaceae</taxon>
        <taxon>Hyphomonas</taxon>
    </lineage>
</organism>
<reference key="1">
    <citation type="journal article" date="2006" name="J. Bacteriol.">
        <title>Comparative genomic evidence for a close relationship between the dimorphic prosthecate bacteria Hyphomonas neptunium and Caulobacter crescentus.</title>
        <authorList>
            <person name="Badger J.H."/>
            <person name="Hoover T.R."/>
            <person name="Brun Y.V."/>
            <person name="Weiner R.M."/>
            <person name="Laub M.T."/>
            <person name="Alexandre G."/>
            <person name="Mrazek J."/>
            <person name="Ren Q."/>
            <person name="Paulsen I.T."/>
            <person name="Nelson K.E."/>
            <person name="Khouri H.M."/>
            <person name="Radune D."/>
            <person name="Sosa J."/>
            <person name="Dodson R.J."/>
            <person name="Sullivan S.A."/>
            <person name="Rosovitz M.J."/>
            <person name="Madupu R."/>
            <person name="Brinkac L.M."/>
            <person name="Durkin A.S."/>
            <person name="Daugherty S.C."/>
            <person name="Kothari S.P."/>
            <person name="Giglio M.G."/>
            <person name="Zhou L."/>
            <person name="Haft D.H."/>
            <person name="Selengut J.D."/>
            <person name="Davidsen T.M."/>
            <person name="Yang Q."/>
            <person name="Zafar N."/>
            <person name="Ward N.L."/>
        </authorList>
    </citation>
    <scope>NUCLEOTIDE SEQUENCE [LARGE SCALE GENOMIC DNA]</scope>
    <source>
        <strain>ATCC 15444</strain>
    </source>
</reference>
<protein>
    <recommendedName>
        <fullName evidence="1">Large-conductance mechanosensitive channel</fullName>
    </recommendedName>
</protein>
<comment type="function">
    <text evidence="1">Channel that opens in response to stretch forces in the membrane lipid bilayer. May participate in the regulation of osmotic pressure changes within the cell.</text>
</comment>
<comment type="subunit">
    <text evidence="1">Homopentamer.</text>
</comment>
<comment type="subcellular location">
    <subcellularLocation>
        <location evidence="1">Cell inner membrane</location>
        <topology evidence="1">Multi-pass membrane protein</topology>
    </subcellularLocation>
</comment>
<comment type="similarity">
    <text evidence="1">Belongs to the MscL family.</text>
</comment>
<evidence type="ECO:0000255" key="1">
    <source>
        <dbReference type="HAMAP-Rule" id="MF_00115"/>
    </source>
</evidence>
<accession>Q0C5R9</accession>
<gene>
    <name evidence="1" type="primary">mscL</name>
    <name type="ordered locus">HNE_0190</name>
</gene>